<gene>
    <name evidence="1" type="primary">aat</name>
    <name type="ordered locus">SARI_02009</name>
</gene>
<feature type="chain" id="PRO_1000083099" description="Leucyl/phenylalanyl-tRNA--protein transferase">
    <location>
        <begin position="1"/>
        <end position="234"/>
    </location>
</feature>
<dbReference type="EC" id="2.3.2.6" evidence="1"/>
<dbReference type="EMBL" id="CP000880">
    <property type="protein sequence ID" value="ABX21889.1"/>
    <property type="molecule type" value="Genomic_DNA"/>
</dbReference>
<dbReference type="SMR" id="A9MHZ9"/>
<dbReference type="STRING" id="41514.SARI_02009"/>
<dbReference type="KEGG" id="ses:SARI_02009"/>
<dbReference type="HOGENOM" id="CLU_075045_0_0_6"/>
<dbReference type="Proteomes" id="UP000002084">
    <property type="component" value="Chromosome"/>
</dbReference>
<dbReference type="GO" id="GO:0005737">
    <property type="term" value="C:cytoplasm"/>
    <property type="evidence" value="ECO:0007669"/>
    <property type="project" value="UniProtKB-SubCell"/>
</dbReference>
<dbReference type="GO" id="GO:0008914">
    <property type="term" value="F:leucyl-tRNA--protein transferase activity"/>
    <property type="evidence" value="ECO:0007669"/>
    <property type="project" value="UniProtKB-UniRule"/>
</dbReference>
<dbReference type="GO" id="GO:0030163">
    <property type="term" value="P:protein catabolic process"/>
    <property type="evidence" value="ECO:0007669"/>
    <property type="project" value="UniProtKB-UniRule"/>
</dbReference>
<dbReference type="FunFam" id="3.30.70.3550:FF:000001">
    <property type="entry name" value="Leucyl/phenylalanyl-tRNA--protein transferase"/>
    <property type="match status" value="1"/>
</dbReference>
<dbReference type="FunFam" id="3.40.630.70:FF:000001">
    <property type="entry name" value="Leucyl/phenylalanyl-tRNA--protein transferase"/>
    <property type="match status" value="1"/>
</dbReference>
<dbReference type="Gene3D" id="3.40.630.70">
    <property type="entry name" value="Leucyl/phenylalanyl-tRNA-protein transferase, C-terminal domain"/>
    <property type="match status" value="1"/>
</dbReference>
<dbReference type="Gene3D" id="3.30.70.3550">
    <property type="entry name" value="Leucyl/phenylalanyl-tRNA-protein transferase, N-terminal domain"/>
    <property type="match status" value="1"/>
</dbReference>
<dbReference type="HAMAP" id="MF_00688">
    <property type="entry name" value="Leu_Phe_trans"/>
    <property type="match status" value="1"/>
</dbReference>
<dbReference type="InterPro" id="IPR016181">
    <property type="entry name" value="Acyl_CoA_acyltransferase"/>
</dbReference>
<dbReference type="InterPro" id="IPR004616">
    <property type="entry name" value="Leu/Phe-tRNA_Trfase"/>
</dbReference>
<dbReference type="InterPro" id="IPR042203">
    <property type="entry name" value="Leu/Phe-tRNA_Trfase_C"/>
</dbReference>
<dbReference type="InterPro" id="IPR042221">
    <property type="entry name" value="Leu/Phe-tRNA_Trfase_N"/>
</dbReference>
<dbReference type="NCBIfam" id="TIGR00667">
    <property type="entry name" value="aat"/>
    <property type="match status" value="1"/>
</dbReference>
<dbReference type="PANTHER" id="PTHR30098">
    <property type="entry name" value="LEUCYL/PHENYLALANYL-TRNA--PROTEIN TRANSFERASE"/>
    <property type="match status" value="1"/>
</dbReference>
<dbReference type="PANTHER" id="PTHR30098:SF2">
    <property type="entry name" value="LEUCYL_PHENYLALANYL-TRNA--PROTEIN TRANSFERASE"/>
    <property type="match status" value="1"/>
</dbReference>
<dbReference type="Pfam" id="PF03588">
    <property type="entry name" value="Leu_Phe_trans"/>
    <property type="match status" value="1"/>
</dbReference>
<dbReference type="SUPFAM" id="SSF55729">
    <property type="entry name" value="Acyl-CoA N-acyltransferases (Nat)"/>
    <property type="match status" value="1"/>
</dbReference>
<comment type="function">
    <text evidence="1">Functions in the N-end rule pathway of protein degradation where it conjugates Leu, Phe and, less efficiently, Met from aminoacyl-tRNAs to the N-termini of proteins containing an N-terminal arginine or lysine.</text>
</comment>
<comment type="catalytic activity">
    <reaction evidence="1">
        <text>N-terminal L-lysyl-[protein] + L-leucyl-tRNA(Leu) = N-terminal L-leucyl-L-lysyl-[protein] + tRNA(Leu) + H(+)</text>
        <dbReference type="Rhea" id="RHEA:12340"/>
        <dbReference type="Rhea" id="RHEA-COMP:9613"/>
        <dbReference type="Rhea" id="RHEA-COMP:9622"/>
        <dbReference type="Rhea" id="RHEA-COMP:12670"/>
        <dbReference type="Rhea" id="RHEA-COMP:12671"/>
        <dbReference type="ChEBI" id="CHEBI:15378"/>
        <dbReference type="ChEBI" id="CHEBI:65249"/>
        <dbReference type="ChEBI" id="CHEBI:78442"/>
        <dbReference type="ChEBI" id="CHEBI:78494"/>
        <dbReference type="ChEBI" id="CHEBI:133043"/>
        <dbReference type="EC" id="2.3.2.6"/>
    </reaction>
</comment>
<comment type="catalytic activity">
    <reaction evidence="1">
        <text>N-terminal L-arginyl-[protein] + L-leucyl-tRNA(Leu) = N-terminal L-leucyl-L-arginyl-[protein] + tRNA(Leu) + H(+)</text>
        <dbReference type="Rhea" id="RHEA:50416"/>
        <dbReference type="Rhea" id="RHEA-COMP:9613"/>
        <dbReference type="Rhea" id="RHEA-COMP:9622"/>
        <dbReference type="Rhea" id="RHEA-COMP:12672"/>
        <dbReference type="Rhea" id="RHEA-COMP:12673"/>
        <dbReference type="ChEBI" id="CHEBI:15378"/>
        <dbReference type="ChEBI" id="CHEBI:64719"/>
        <dbReference type="ChEBI" id="CHEBI:78442"/>
        <dbReference type="ChEBI" id="CHEBI:78494"/>
        <dbReference type="ChEBI" id="CHEBI:133044"/>
        <dbReference type="EC" id="2.3.2.6"/>
    </reaction>
</comment>
<comment type="catalytic activity">
    <reaction evidence="1">
        <text>L-phenylalanyl-tRNA(Phe) + an N-terminal L-alpha-aminoacyl-[protein] = an N-terminal L-phenylalanyl-L-alpha-aminoacyl-[protein] + tRNA(Phe)</text>
        <dbReference type="Rhea" id="RHEA:43632"/>
        <dbReference type="Rhea" id="RHEA-COMP:9668"/>
        <dbReference type="Rhea" id="RHEA-COMP:9699"/>
        <dbReference type="Rhea" id="RHEA-COMP:10636"/>
        <dbReference type="Rhea" id="RHEA-COMP:10637"/>
        <dbReference type="ChEBI" id="CHEBI:78442"/>
        <dbReference type="ChEBI" id="CHEBI:78531"/>
        <dbReference type="ChEBI" id="CHEBI:78597"/>
        <dbReference type="ChEBI" id="CHEBI:83561"/>
        <dbReference type="EC" id="2.3.2.6"/>
    </reaction>
</comment>
<comment type="subcellular location">
    <subcellularLocation>
        <location evidence="1">Cytoplasm</location>
    </subcellularLocation>
</comment>
<comment type="similarity">
    <text evidence="1">Belongs to the L/F-transferase family.</text>
</comment>
<keyword id="KW-0012">Acyltransferase</keyword>
<keyword id="KW-0963">Cytoplasm</keyword>
<keyword id="KW-1185">Reference proteome</keyword>
<keyword id="KW-0808">Transferase</keyword>
<reference key="1">
    <citation type="submission" date="2007-11" db="EMBL/GenBank/DDBJ databases">
        <authorList>
            <consortium name="The Salmonella enterica serovar Arizonae Genome Sequencing Project"/>
            <person name="McClelland M."/>
            <person name="Sanderson E.K."/>
            <person name="Porwollik S."/>
            <person name="Spieth J."/>
            <person name="Clifton W.S."/>
            <person name="Fulton R."/>
            <person name="Chunyan W."/>
            <person name="Wollam A."/>
            <person name="Shah N."/>
            <person name="Pepin K."/>
            <person name="Bhonagiri V."/>
            <person name="Nash W."/>
            <person name="Johnson M."/>
            <person name="Thiruvilangam P."/>
            <person name="Wilson R."/>
        </authorList>
    </citation>
    <scope>NUCLEOTIDE SEQUENCE [LARGE SCALE GENOMIC DNA]</scope>
    <source>
        <strain>ATCC BAA-731 / CDC346-86 / RSK2980</strain>
    </source>
</reference>
<evidence type="ECO:0000255" key="1">
    <source>
        <dbReference type="HAMAP-Rule" id="MF_00688"/>
    </source>
</evidence>
<sequence>MRLVQLSRHSIAFPSPEGALREPNGLLALGGDLSPARLLMAYQHGIFPWFSPGDPILWWSPDPRAVLWPEEFHLSRSMKRFHNTSPYRVTLNYAFDRVIDGCTNHRDEGTWITRGIEEAYRRLHELGHAHSIEVWRDQELVGGMYGVSQGALFCGESMFSRKENASKTALLVFCAEFIHHGGKLIDCQVLNSHTASLGAIEIPRCDYLEHLSRLRQQPLVSRFWVPRTLFLPRK</sequence>
<accession>A9MHZ9</accession>
<organism>
    <name type="scientific">Salmonella arizonae (strain ATCC BAA-731 / CDC346-86 / RSK2980)</name>
    <dbReference type="NCBI Taxonomy" id="41514"/>
    <lineage>
        <taxon>Bacteria</taxon>
        <taxon>Pseudomonadati</taxon>
        <taxon>Pseudomonadota</taxon>
        <taxon>Gammaproteobacteria</taxon>
        <taxon>Enterobacterales</taxon>
        <taxon>Enterobacteriaceae</taxon>
        <taxon>Salmonella</taxon>
    </lineage>
</organism>
<name>LFTR_SALAR</name>
<protein>
    <recommendedName>
        <fullName evidence="1">Leucyl/phenylalanyl-tRNA--protein transferase</fullName>
        <ecNumber evidence="1">2.3.2.6</ecNumber>
    </recommendedName>
    <alternativeName>
        <fullName evidence="1">L/F-transferase</fullName>
    </alternativeName>
    <alternativeName>
        <fullName evidence="1">Leucyltransferase</fullName>
    </alternativeName>
    <alternativeName>
        <fullName evidence="1">Phenyalanyltransferase</fullName>
    </alternativeName>
</protein>
<proteinExistence type="inferred from homology"/>